<protein>
    <recommendedName>
        <fullName evidence="1">Large ribosomal subunit protein uL3</fullName>
    </recommendedName>
    <alternativeName>
        <fullName evidence="3">50S ribosomal protein L3</fullName>
    </alternativeName>
</protein>
<accession>A3NEH9</accession>
<dbReference type="EMBL" id="CP000570">
    <property type="protein sequence ID" value="ABN84596.1"/>
    <property type="molecule type" value="Genomic_DNA"/>
</dbReference>
<dbReference type="RefSeq" id="WP_004521904.1">
    <property type="nucleotide sequence ID" value="NC_009074.1"/>
</dbReference>
<dbReference type="SMR" id="A3NEH9"/>
<dbReference type="GeneID" id="93061832"/>
<dbReference type="KEGG" id="bpd:BURPS668_3746"/>
<dbReference type="HOGENOM" id="CLU_044142_4_1_4"/>
<dbReference type="GO" id="GO:0022625">
    <property type="term" value="C:cytosolic large ribosomal subunit"/>
    <property type="evidence" value="ECO:0007669"/>
    <property type="project" value="TreeGrafter"/>
</dbReference>
<dbReference type="GO" id="GO:0019843">
    <property type="term" value="F:rRNA binding"/>
    <property type="evidence" value="ECO:0007669"/>
    <property type="project" value="UniProtKB-UniRule"/>
</dbReference>
<dbReference type="GO" id="GO:0003735">
    <property type="term" value="F:structural constituent of ribosome"/>
    <property type="evidence" value="ECO:0007669"/>
    <property type="project" value="InterPro"/>
</dbReference>
<dbReference type="GO" id="GO:0006412">
    <property type="term" value="P:translation"/>
    <property type="evidence" value="ECO:0007669"/>
    <property type="project" value="UniProtKB-UniRule"/>
</dbReference>
<dbReference type="FunFam" id="2.40.30.10:FF:000004">
    <property type="entry name" value="50S ribosomal protein L3"/>
    <property type="match status" value="1"/>
</dbReference>
<dbReference type="FunFam" id="3.30.160.810:FF:000001">
    <property type="entry name" value="50S ribosomal protein L3"/>
    <property type="match status" value="1"/>
</dbReference>
<dbReference type="Gene3D" id="3.30.160.810">
    <property type="match status" value="1"/>
</dbReference>
<dbReference type="Gene3D" id="2.40.30.10">
    <property type="entry name" value="Translation factors"/>
    <property type="match status" value="1"/>
</dbReference>
<dbReference type="HAMAP" id="MF_01325_B">
    <property type="entry name" value="Ribosomal_uL3_B"/>
    <property type="match status" value="1"/>
</dbReference>
<dbReference type="InterPro" id="IPR000597">
    <property type="entry name" value="Ribosomal_uL3"/>
</dbReference>
<dbReference type="InterPro" id="IPR019927">
    <property type="entry name" value="Ribosomal_uL3_bac/org-type"/>
</dbReference>
<dbReference type="InterPro" id="IPR019926">
    <property type="entry name" value="Ribosomal_uL3_CS"/>
</dbReference>
<dbReference type="InterPro" id="IPR009000">
    <property type="entry name" value="Transl_B-barrel_sf"/>
</dbReference>
<dbReference type="NCBIfam" id="TIGR03625">
    <property type="entry name" value="L3_bact"/>
    <property type="match status" value="1"/>
</dbReference>
<dbReference type="PANTHER" id="PTHR11229">
    <property type="entry name" value="50S RIBOSOMAL PROTEIN L3"/>
    <property type="match status" value="1"/>
</dbReference>
<dbReference type="PANTHER" id="PTHR11229:SF16">
    <property type="entry name" value="LARGE RIBOSOMAL SUBUNIT PROTEIN UL3C"/>
    <property type="match status" value="1"/>
</dbReference>
<dbReference type="Pfam" id="PF00297">
    <property type="entry name" value="Ribosomal_L3"/>
    <property type="match status" value="1"/>
</dbReference>
<dbReference type="SUPFAM" id="SSF50447">
    <property type="entry name" value="Translation proteins"/>
    <property type="match status" value="1"/>
</dbReference>
<dbReference type="PROSITE" id="PS00474">
    <property type="entry name" value="RIBOSOMAL_L3"/>
    <property type="match status" value="1"/>
</dbReference>
<organism>
    <name type="scientific">Burkholderia pseudomallei (strain 668)</name>
    <dbReference type="NCBI Taxonomy" id="320373"/>
    <lineage>
        <taxon>Bacteria</taxon>
        <taxon>Pseudomonadati</taxon>
        <taxon>Pseudomonadota</taxon>
        <taxon>Betaproteobacteria</taxon>
        <taxon>Burkholderiales</taxon>
        <taxon>Burkholderiaceae</taxon>
        <taxon>Burkholderia</taxon>
        <taxon>pseudomallei group</taxon>
    </lineage>
</organism>
<comment type="function">
    <text evidence="1">One of the primary rRNA binding proteins, it binds directly near the 3'-end of the 23S rRNA, where it nucleates assembly of the 50S subunit.</text>
</comment>
<comment type="subunit">
    <text evidence="1">Part of the 50S ribosomal subunit. Forms a cluster with proteins L14 and L19.</text>
</comment>
<comment type="PTM">
    <text evidence="1">Methylated by PrmB.</text>
</comment>
<comment type="similarity">
    <text evidence="1">Belongs to the universal ribosomal protein uL3 family.</text>
</comment>
<name>RL3_BURP6</name>
<reference key="1">
    <citation type="journal article" date="2010" name="Genome Biol. Evol.">
        <title>Continuing evolution of Burkholderia mallei through genome reduction and large-scale rearrangements.</title>
        <authorList>
            <person name="Losada L."/>
            <person name="Ronning C.M."/>
            <person name="DeShazer D."/>
            <person name="Woods D."/>
            <person name="Fedorova N."/>
            <person name="Kim H.S."/>
            <person name="Shabalina S.A."/>
            <person name="Pearson T.R."/>
            <person name="Brinkac L."/>
            <person name="Tan P."/>
            <person name="Nandi T."/>
            <person name="Crabtree J."/>
            <person name="Badger J."/>
            <person name="Beckstrom-Sternberg S."/>
            <person name="Saqib M."/>
            <person name="Schutzer S.E."/>
            <person name="Keim P."/>
            <person name="Nierman W.C."/>
        </authorList>
    </citation>
    <scope>NUCLEOTIDE SEQUENCE [LARGE SCALE GENOMIC DNA]</scope>
    <source>
        <strain>668</strain>
    </source>
</reference>
<gene>
    <name evidence="1" type="primary">rplC</name>
    <name type="ordered locus">BURPS668_3746</name>
</gene>
<sequence>MSLGLVGRKVGMTRIFTAEGDSIPVTVLDVSDNRVTQIKTVETDGYTAVQVAFGSRRASRVTKPLAGHLAKAGVEAGEILKEFRIEADKAAELSNGAVIGPDLFEVGQKVDVQGVSIGKGYAGTIKRYNFGSGRASHGNSRSHNVPGSIGMAQDPGRVFPGKRMTGHMGDETVTVQNLEIARIDADRKLLLVKGAVPGAKGGKVFVTPAVKTRAVKGAK</sequence>
<keyword id="KW-0488">Methylation</keyword>
<keyword id="KW-0687">Ribonucleoprotein</keyword>
<keyword id="KW-0689">Ribosomal protein</keyword>
<keyword id="KW-0694">RNA-binding</keyword>
<keyword id="KW-0699">rRNA-binding</keyword>
<feature type="chain" id="PRO_1000052025" description="Large ribosomal subunit protein uL3">
    <location>
        <begin position="1"/>
        <end position="219"/>
    </location>
</feature>
<feature type="region of interest" description="Disordered" evidence="2">
    <location>
        <begin position="133"/>
        <end position="153"/>
    </location>
</feature>
<feature type="modified residue" description="N5-methylglutamine" evidence="1">
    <location>
        <position position="153"/>
    </location>
</feature>
<proteinExistence type="inferred from homology"/>
<evidence type="ECO:0000255" key="1">
    <source>
        <dbReference type="HAMAP-Rule" id="MF_01325"/>
    </source>
</evidence>
<evidence type="ECO:0000256" key="2">
    <source>
        <dbReference type="SAM" id="MobiDB-lite"/>
    </source>
</evidence>
<evidence type="ECO:0000305" key="3"/>